<accession>Q64598</accession>
<protein>
    <recommendedName>
        <fullName>Histone H2A type 1-F</fullName>
    </recommendedName>
</protein>
<evidence type="ECO:0000250" key="1">
    <source>
        <dbReference type="UniProtKB" id="C0HKE1"/>
    </source>
</evidence>
<evidence type="ECO:0000250" key="2">
    <source>
        <dbReference type="UniProtKB" id="P0C0S5"/>
    </source>
</evidence>
<evidence type="ECO:0000250" key="3">
    <source>
        <dbReference type="UniProtKB" id="P0C0S8"/>
    </source>
</evidence>
<evidence type="ECO:0000250" key="4">
    <source>
        <dbReference type="UniProtKB" id="P22752"/>
    </source>
</evidence>
<evidence type="ECO:0000250" key="5">
    <source>
        <dbReference type="UniProtKB" id="Q8CGP5"/>
    </source>
</evidence>
<evidence type="ECO:0000256" key="6">
    <source>
        <dbReference type="SAM" id="MobiDB-lite"/>
    </source>
</evidence>
<evidence type="ECO:0000305" key="7"/>
<dbReference type="EMBL" id="X59961">
    <property type="protein sequence ID" value="CAA42586.1"/>
    <property type="molecule type" value="Genomic_DNA"/>
</dbReference>
<dbReference type="PIR" id="S26186">
    <property type="entry name" value="HSRT2A"/>
</dbReference>
<dbReference type="SMR" id="Q64598"/>
<dbReference type="FunCoup" id="Q64598">
    <property type="interactions" value="528"/>
</dbReference>
<dbReference type="IntAct" id="Q64598">
    <property type="interactions" value="1"/>
</dbReference>
<dbReference type="jPOST" id="Q64598"/>
<dbReference type="AGR" id="RGD:1307165"/>
<dbReference type="AGR" id="RGD:1309078"/>
<dbReference type="AGR" id="RGD:1564767"/>
<dbReference type="AGR" id="RGD:1584064"/>
<dbReference type="AGR" id="RGD:1589461"/>
<dbReference type="AGR" id="RGD:1594367"/>
<dbReference type="AGR" id="RGD:3854"/>
<dbReference type="AGR" id="RGD:621437"/>
<dbReference type="AGR" id="RGD:6497956"/>
<dbReference type="InParanoid" id="Q64598"/>
<dbReference type="PhylomeDB" id="Q64598"/>
<dbReference type="Proteomes" id="UP000002494">
    <property type="component" value="Unplaced"/>
</dbReference>
<dbReference type="GO" id="GO:0000786">
    <property type="term" value="C:nucleosome"/>
    <property type="evidence" value="ECO:0000318"/>
    <property type="project" value="GO_Central"/>
</dbReference>
<dbReference type="GO" id="GO:0005634">
    <property type="term" value="C:nucleus"/>
    <property type="evidence" value="ECO:0000318"/>
    <property type="project" value="GO_Central"/>
</dbReference>
<dbReference type="GO" id="GO:0003677">
    <property type="term" value="F:DNA binding"/>
    <property type="evidence" value="ECO:0007669"/>
    <property type="project" value="UniProtKB-KW"/>
</dbReference>
<dbReference type="GO" id="GO:0046982">
    <property type="term" value="F:protein heterodimerization activity"/>
    <property type="evidence" value="ECO:0007669"/>
    <property type="project" value="InterPro"/>
</dbReference>
<dbReference type="GO" id="GO:0030527">
    <property type="term" value="F:structural constituent of chromatin"/>
    <property type="evidence" value="ECO:0000318"/>
    <property type="project" value="GO_Central"/>
</dbReference>
<dbReference type="GO" id="GO:0031507">
    <property type="term" value="P:heterochromatin formation"/>
    <property type="evidence" value="ECO:0000318"/>
    <property type="project" value="GO_Central"/>
</dbReference>
<dbReference type="CDD" id="cd00074">
    <property type="entry name" value="HFD_H2A"/>
    <property type="match status" value="1"/>
</dbReference>
<dbReference type="FunFam" id="1.10.20.10:FF:000103">
    <property type="entry name" value="Histone H2A type 1"/>
    <property type="match status" value="1"/>
</dbReference>
<dbReference type="Gene3D" id="1.10.20.10">
    <property type="entry name" value="Histone, subunit A"/>
    <property type="match status" value="1"/>
</dbReference>
<dbReference type="InterPro" id="IPR009072">
    <property type="entry name" value="Histone-fold"/>
</dbReference>
<dbReference type="InterPro" id="IPR002119">
    <property type="entry name" value="Histone_H2A"/>
</dbReference>
<dbReference type="InterPro" id="IPR007125">
    <property type="entry name" value="Histone_H2A/H2B/H3"/>
</dbReference>
<dbReference type="InterPro" id="IPR032454">
    <property type="entry name" value="Histone_H2A_C"/>
</dbReference>
<dbReference type="InterPro" id="IPR032458">
    <property type="entry name" value="Histone_H2A_CS"/>
</dbReference>
<dbReference type="PANTHER" id="PTHR23430">
    <property type="entry name" value="HISTONE H2A"/>
    <property type="match status" value="1"/>
</dbReference>
<dbReference type="Pfam" id="PF00125">
    <property type="entry name" value="Histone"/>
    <property type="match status" value="1"/>
</dbReference>
<dbReference type="Pfam" id="PF16211">
    <property type="entry name" value="Histone_H2A_C"/>
    <property type="match status" value="1"/>
</dbReference>
<dbReference type="PRINTS" id="PR00620">
    <property type="entry name" value="HISTONEH2A"/>
</dbReference>
<dbReference type="SMART" id="SM00414">
    <property type="entry name" value="H2A"/>
    <property type="match status" value="1"/>
</dbReference>
<dbReference type="SUPFAM" id="SSF47113">
    <property type="entry name" value="Histone-fold"/>
    <property type="match status" value="1"/>
</dbReference>
<dbReference type="PROSITE" id="PS00046">
    <property type="entry name" value="HISTONE_H2A"/>
    <property type="match status" value="1"/>
</dbReference>
<feature type="initiator methionine" description="Removed" evidence="7">
    <location>
        <position position="1"/>
    </location>
</feature>
<feature type="chain" id="PRO_0000227503" description="Histone H2A type 1-F">
    <location>
        <begin position="2"/>
        <end position="130"/>
    </location>
</feature>
<feature type="region of interest" description="Disordered" evidence="6">
    <location>
        <begin position="1"/>
        <end position="22"/>
    </location>
</feature>
<feature type="compositionally biased region" description="Basic residues" evidence="6">
    <location>
        <begin position="7"/>
        <end position="19"/>
    </location>
</feature>
<feature type="modified residue" description="Phosphoserine; by RPS6KA5" evidence="3">
    <location>
        <position position="2"/>
    </location>
</feature>
<feature type="modified residue" description="Citrulline; alternate" evidence="3">
    <location>
        <position position="4"/>
    </location>
</feature>
<feature type="modified residue" description="Symmetric dimethylarginine; by PRMT5; alternate" evidence="5">
    <location>
        <position position="4"/>
    </location>
</feature>
<feature type="modified residue" description="N6-(2-hydroxyisobutyryl)lysine" evidence="3">
    <location>
        <position position="6"/>
    </location>
</feature>
<feature type="modified residue" description="N6-(2-hydroxyisobutyryl)lysine" evidence="3">
    <location>
        <position position="10"/>
    </location>
</feature>
<feature type="modified residue" description="N6-lactoyllysine; alternate" evidence="2">
    <location>
        <position position="10"/>
    </location>
</feature>
<feature type="modified residue" description="N6-(2-hydroxyisobutyryl)lysine; alternate" evidence="3">
    <location>
        <position position="37"/>
    </location>
</feature>
<feature type="modified residue" description="N6-(beta-hydroxybutyryl)lysine; alternate" evidence="1">
    <location>
        <position position="37"/>
    </location>
</feature>
<feature type="modified residue" description="N6-crotonyllysine; alternate" evidence="3">
    <location>
        <position position="37"/>
    </location>
</feature>
<feature type="modified residue" description="N6-(2-hydroxyisobutyryl)lysine" evidence="3">
    <location>
        <position position="75"/>
    </location>
</feature>
<feature type="modified residue" description="N6-(2-hydroxyisobutyryl)lysine" evidence="3">
    <location>
        <position position="76"/>
    </location>
</feature>
<feature type="modified residue" description="N6-(2-hydroxyisobutyryl)lysine" evidence="3">
    <location>
        <position position="96"/>
    </location>
</feature>
<feature type="modified residue" description="N6-glutaryllysine; alternate" evidence="3">
    <location>
        <position position="96"/>
    </location>
</feature>
<feature type="modified residue" description="N5-methylglutamine" evidence="3">
    <location>
        <position position="105"/>
    </location>
</feature>
<feature type="modified residue" description="N6-(2-hydroxyisobutyryl)lysine; alternate" evidence="3">
    <location>
        <position position="119"/>
    </location>
</feature>
<feature type="modified residue" description="N6-crotonyllysine; alternate" evidence="3">
    <location>
        <position position="119"/>
    </location>
</feature>
<feature type="modified residue" description="N6-glutaryllysine; alternate" evidence="3">
    <location>
        <position position="119"/>
    </location>
</feature>
<feature type="modified residue" description="N6-crotonyllysine; alternate" evidence="3">
    <location>
        <position position="120"/>
    </location>
</feature>
<feature type="modified residue" description="N6-glutaryllysine; alternate" evidence="3">
    <location>
        <position position="120"/>
    </location>
</feature>
<feature type="modified residue" description="Phosphothreonine; by DCAF1" evidence="3">
    <location>
        <position position="121"/>
    </location>
</feature>
<feature type="modified residue" description="N6-crotonyllysine; alternate" evidence="3">
    <location>
        <position position="126"/>
    </location>
</feature>
<feature type="modified residue" description="N6-glutaryllysine; alternate" evidence="3">
    <location>
        <position position="126"/>
    </location>
</feature>
<feature type="cross-link" description="Glycyl lysine isopeptide (Lys-Gly) (interchain with G-Cter in ubiquitin); alternate" evidence="5">
    <location>
        <position position="120"/>
    </location>
</feature>
<proteinExistence type="inferred from homology"/>
<reference key="1">
    <citation type="journal article" date="1991" name="Nucleic Acids Res.">
        <title>Presence of a bi-directional S phase-specific transcription regulatory element in the promoter shared by testis-specific TH2A and TH2B histone genes.</title>
        <authorList>
            <person name="Huh N.E."/>
            <person name="Hwang I."/>
            <person name="Lim K."/>
            <person name="You K.H."/>
            <person name="Chae C.-B."/>
        </authorList>
    </citation>
    <scope>NUCLEOTIDE SEQUENCE [GENOMIC DNA]</scope>
    <source>
        <strain>Sprague-Dawley</strain>
    </source>
</reference>
<keyword id="KW-0007">Acetylation</keyword>
<keyword id="KW-0158">Chromosome</keyword>
<keyword id="KW-0164">Citrullination</keyword>
<keyword id="KW-0238">DNA-binding</keyword>
<keyword id="KW-0379">Hydroxylation</keyword>
<keyword id="KW-1017">Isopeptide bond</keyword>
<keyword id="KW-0488">Methylation</keyword>
<keyword id="KW-0544">Nucleosome core</keyword>
<keyword id="KW-0539">Nucleus</keyword>
<keyword id="KW-0597">Phosphoprotein</keyword>
<keyword id="KW-1185">Reference proteome</keyword>
<keyword id="KW-0832">Ubl conjugation</keyword>
<organism>
    <name type="scientific">Rattus norvegicus</name>
    <name type="common">Rat</name>
    <dbReference type="NCBI Taxonomy" id="10116"/>
    <lineage>
        <taxon>Eukaryota</taxon>
        <taxon>Metazoa</taxon>
        <taxon>Chordata</taxon>
        <taxon>Craniata</taxon>
        <taxon>Vertebrata</taxon>
        <taxon>Euteleostomi</taxon>
        <taxon>Mammalia</taxon>
        <taxon>Eutheria</taxon>
        <taxon>Euarchontoglires</taxon>
        <taxon>Glires</taxon>
        <taxon>Rodentia</taxon>
        <taxon>Myomorpha</taxon>
        <taxon>Muroidea</taxon>
        <taxon>Muridae</taxon>
        <taxon>Murinae</taxon>
        <taxon>Rattus</taxon>
    </lineage>
</organism>
<name>H2A1F_RAT</name>
<comment type="function">
    <text>Core component of nucleosome. Nucleosomes wrap and compact DNA into chromatin, limiting DNA accessibility to the cellular machineries which require DNA as a template. Histones thereby play a central role in transcription regulation, DNA repair, DNA replication and chromosomal stability. DNA accessibility is regulated via a complex set of post-translational modifications of histones, also called histone code, and nucleosome remodeling.</text>
</comment>
<comment type="subunit">
    <text>The nucleosome is a histone octamer containing two molecules each of H2A, H2B, H3 and H4 assembled in one H3-H4 heterotetramer and two H2A-H2B heterodimers. The octamer wraps approximately 147 bp of DNA.</text>
</comment>
<comment type="subcellular location">
    <subcellularLocation>
        <location>Nucleus</location>
    </subcellularLocation>
    <subcellularLocation>
        <location>Chromosome</location>
    </subcellularLocation>
</comment>
<comment type="PTM">
    <text evidence="3">Deiminated on Arg-4 in granulocytes upon calcium entry.</text>
</comment>
<comment type="PTM">
    <text evidence="3">Monoubiquitination of Lys-120 (H2AK119Ub) by RING1, TRIM37 and RNF2/RING2 complex gives a specific tag for epigenetic transcriptional repression and participates in X chromosome inactivation of female mammals. It is involved in the initiation of both imprinted and random X inactivation. Ubiquitinated H2A is enriched in inactive X chromosome chromatin. Ubiquitination of H2A functions downstream of methylation of 'Lys-27' of histone H3 (H3K27me). H2AK119Ub by RNF2/RING2 can also be induced by ultraviolet and may be involved in DNA repair. Following DNA double-strand breaks (DSBs), it is ubiquitinated through 'Lys-63' linkage of ubiquitin moieties by the E2 ligase UBE2N and the E3 ligases RNF8 and RNF168, leading to the recruitment of repair proteins to sites of DNA damage. Ubiquitination at Lys-14 and Lys-16 (H2AK13Ub and H2AK15Ub, respectively) in response to DNA damage is initiated by RNF168 that mediates monoubiquitination at these 2 sites, and 'Lys-63'-linked ubiquitin are then conjugated to monoubiquitin; RNF8 is able to extend 'Lys-63'-linked ubiquitin chains in vitro. H2AK119Ub and ionizing radiation-induced 'Lys-63'-linked ubiquitination (H2AK13Ub and H2AK15Ub) are distinct events.</text>
</comment>
<comment type="PTM">
    <text evidence="3">Phosphorylation on Ser-2 (H2AS1ph) is enhanced during mitosis. Phosphorylation on Ser-2 by RPS6KA5/MSK1 directly represses transcription. Acetylation of H3 inhibits Ser-2 phosphorylation by RPS6KA5/MSK1. Phosphorylation at Thr-121 (H2AT120ph) by DCAF1 is present in the regulatory region of many tumor suppresor genes and down-regulates their transcription.</text>
</comment>
<comment type="PTM">
    <text evidence="4">Symmetric dimethylation on Arg-4 by the PRDM1/PRMT5 complex may play a crucial role in the germ-cell lineage.</text>
</comment>
<comment type="PTM">
    <text evidence="3">Glutamine methylation at Gln-105 (H2AQ104me) by FBL is specifically dedicated to polymerase I. It is present at 35S ribosomal DNA locus and impairs binding of the FACT complex.</text>
</comment>
<comment type="PTM">
    <text evidence="3">Crotonylation (Kcr) is specifically present in male germ cells and marks testis-specific genes in post-meiotic cells, including X-linked genes that escape sex chromosome inactivation in haploid cells. Crotonylation marks active promoters and enhancers and confers resistance to transcriptional repressors. It is also associated with post-meiotically activated genes on autosomes.</text>
</comment>
<comment type="PTM">
    <text evidence="2">Lactylated in macrophages by EP300/P300 by using lactoyl-CoA directly derived from endogenous or exogenous lactate, leading to stimulates gene transcription.</text>
</comment>
<comment type="similarity">
    <text evidence="7">Belongs to the histone H2A family.</text>
</comment>
<sequence>MSGRGKQGGKARAKAKTRSSRAGLQFPVGRVHRLLRKGNYSERVGAGAPVYLAAVLEYLTAEILELAANAARDNKKTRIIPRHLQLAIRNDEELNKLLGRVTIAQGGVLPNIQAVLLPKKTESHHKPKGK</sequence>